<comment type="function">
    <text evidence="1">Probable N-acetylmuramyl-L-alanine amidase. Required for spore cortex hydrolysis during germination. May form a complex with some hydrophobic spore component, leading to a stabilization of the enzyme in a spore-bound form (By similarity).</text>
</comment>
<comment type="subcellular location">
    <subcellularLocation>
        <location evidence="1">Forespore</location>
    </subcellularLocation>
    <text evidence="1">Expressed in the forespore and then transported across the inner forespore membrane and deposited on the outside of the cortex.</text>
</comment>
<comment type="similarity">
    <text evidence="3">Belongs to the SleB family.</text>
</comment>
<gene>
    <name type="primary">sleB</name>
    <name type="ordered locus">BC_2753</name>
</gene>
<reference key="1">
    <citation type="journal article" date="2003" name="Nature">
        <title>Genome sequence of Bacillus cereus and comparative analysis with Bacillus anthracis.</title>
        <authorList>
            <person name="Ivanova N."/>
            <person name="Sorokin A."/>
            <person name="Anderson I."/>
            <person name="Galleron N."/>
            <person name="Candelon B."/>
            <person name="Kapatral V."/>
            <person name="Bhattacharyya A."/>
            <person name="Reznik G."/>
            <person name="Mikhailova N."/>
            <person name="Lapidus A."/>
            <person name="Chu L."/>
            <person name="Mazur M."/>
            <person name="Goltsman E."/>
            <person name="Larsen N."/>
            <person name="D'Souza M."/>
            <person name="Walunas T."/>
            <person name="Grechkin Y."/>
            <person name="Pusch G."/>
            <person name="Haselkorn R."/>
            <person name="Fonstein M."/>
            <person name="Ehrlich S.D."/>
            <person name="Overbeek R."/>
            <person name="Kyrpides N.C."/>
        </authorList>
    </citation>
    <scope>NUCLEOTIDE SEQUENCE [LARGE SCALE GENOMIC DNA]</scope>
    <source>
        <strain>ATCC 14579 / DSM 31 / CCUG 7414 / JCM 2152 / NBRC 15305 / NCIMB 9373 / NCTC 2599 / NRRL B-3711</strain>
    </source>
</reference>
<proteinExistence type="evidence at protein level"/>
<dbReference type="EMBL" id="AE016877">
    <property type="protein sequence ID" value="AAP09706.1"/>
    <property type="molecule type" value="Genomic_DNA"/>
</dbReference>
<dbReference type="RefSeq" id="NP_832505.1">
    <property type="nucleotide sequence ID" value="NC_004722.1"/>
</dbReference>
<dbReference type="RefSeq" id="WP_001249053.1">
    <property type="nucleotide sequence ID" value="NZ_CP138336.1"/>
</dbReference>
<dbReference type="PDB" id="4F55">
    <property type="method" value="X-ray"/>
    <property type="resolution" value="1.85 A"/>
    <property type="chains" value="A=136-259"/>
</dbReference>
<dbReference type="PDB" id="6TCI">
    <property type="method" value="X-ray"/>
    <property type="resolution" value="1.47 A"/>
    <property type="chains" value="A=32-105"/>
</dbReference>
<dbReference type="PDBsum" id="4F55"/>
<dbReference type="PDBsum" id="6TCI"/>
<dbReference type="SMR" id="P0A3V0"/>
<dbReference type="STRING" id="226900.BC_2753"/>
<dbReference type="GeneID" id="93008420"/>
<dbReference type="KEGG" id="bce:BC2753"/>
<dbReference type="PATRIC" id="fig|226900.8.peg.2808"/>
<dbReference type="HOGENOM" id="CLU_053345_0_0_9"/>
<dbReference type="OrthoDB" id="9785345at2"/>
<dbReference type="EvolutionaryTrace" id="P0A3V0"/>
<dbReference type="Proteomes" id="UP000001417">
    <property type="component" value="Chromosome"/>
</dbReference>
<dbReference type="GO" id="GO:0042763">
    <property type="term" value="C:intracellular immature spore"/>
    <property type="evidence" value="ECO:0007669"/>
    <property type="project" value="UniProtKB-SubCell"/>
</dbReference>
<dbReference type="GO" id="GO:0016787">
    <property type="term" value="F:hydrolase activity"/>
    <property type="evidence" value="ECO:0007669"/>
    <property type="project" value="UniProtKB-KW"/>
</dbReference>
<dbReference type="GO" id="GO:0071555">
    <property type="term" value="P:cell wall organization"/>
    <property type="evidence" value="ECO:0007669"/>
    <property type="project" value="UniProtKB-KW"/>
</dbReference>
<dbReference type="GO" id="GO:0009847">
    <property type="term" value="P:spore germination"/>
    <property type="evidence" value="ECO:0007669"/>
    <property type="project" value="InterPro"/>
</dbReference>
<dbReference type="GO" id="GO:0030435">
    <property type="term" value="P:sporulation resulting in formation of a cellular spore"/>
    <property type="evidence" value="ECO:0007669"/>
    <property type="project" value="UniProtKB-KW"/>
</dbReference>
<dbReference type="FunFam" id="1.10.10.2520:FF:000001">
    <property type="entry name" value="Spore cortex-lytic enzyme"/>
    <property type="match status" value="1"/>
</dbReference>
<dbReference type="FunFam" id="1.10.101.10:FF:000001">
    <property type="entry name" value="Spore cortex-lytic enzyme"/>
    <property type="match status" value="1"/>
</dbReference>
<dbReference type="FunFam" id="6.20.240.60:FF:000001">
    <property type="entry name" value="Spore cortex-lytic enzyme"/>
    <property type="match status" value="1"/>
</dbReference>
<dbReference type="Gene3D" id="6.20.240.60">
    <property type="match status" value="1"/>
</dbReference>
<dbReference type="Gene3D" id="1.10.10.2520">
    <property type="entry name" value="Cell wall hydrolase SleB, domain 1"/>
    <property type="match status" value="1"/>
</dbReference>
<dbReference type="Gene3D" id="1.10.101.10">
    <property type="entry name" value="PGBD-like superfamily/PGBD"/>
    <property type="match status" value="1"/>
</dbReference>
<dbReference type="InterPro" id="IPR011105">
    <property type="entry name" value="Cell_wall_hydrolase_SleB"/>
</dbReference>
<dbReference type="InterPro" id="IPR002477">
    <property type="entry name" value="Peptidoglycan-bd-like"/>
</dbReference>
<dbReference type="InterPro" id="IPR036365">
    <property type="entry name" value="PGBD-like_sf"/>
</dbReference>
<dbReference type="InterPro" id="IPR036366">
    <property type="entry name" value="PGBDSf"/>
</dbReference>
<dbReference type="InterPro" id="IPR042047">
    <property type="entry name" value="SleB_dom1"/>
</dbReference>
<dbReference type="InterPro" id="IPR014224">
    <property type="entry name" value="Spore_cortex_SleB"/>
</dbReference>
<dbReference type="NCBIfam" id="TIGR02869">
    <property type="entry name" value="spore_SleB"/>
    <property type="match status" value="1"/>
</dbReference>
<dbReference type="Pfam" id="PF07486">
    <property type="entry name" value="Hydrolase_2"/>
    <property type="match status" value="1"/>
</dbReference>
<dbReference type="Pfam" id="PF01471">
    <property type="entry name" value="PG_binding_1"/>
    <property type="match status" value="1"/>
</dbReference>
<dbReference type="SUPFAM" id="SSF47090">
    <property type="entry name" value="PGBD-like"/>
    <property type="match status" value="1"/>
</dbReference>
<protein>
    <recommendedName>
        <fullName>Spore cortex-lytic enzyme</fullName>
        <shortName>SCLE</shortName>
    </recommendedName>
    <alternativeName>
        <fullName>Germination-specific amidase</fullName>
    </alternativeName>
</protein>
<evidence type="ECO:0000250" key="1"/>
<evidence type="ECO:0000256" key="2">
    <source>
        <dbReference type="SAM" id="MobiDB-lite"/>
    </source>
</evidence>
<evidence type="ECO:0000305" key="3"/>
<evidence type="ECO:0007829" key="4">
    <source>
        <dbReference type="PDB" id="4F55"/>
    </source>
</evidence>
<evidence type="ECO:0007829" key="5">
    <source>
        <dbReference type="PDB" id="6TCI"/>
    </source>
</evidence>
<keyword id="KW-0002">3D-structure</keyword>
<keyword id="KW-0961">Cell wall biogenesis/degradation</keyword>
<keyword id="KW-0309">Germination</keyword>
<keyword id="KW-0378">Hydrolase</keyword>
<keyword id="KW-1185">Reference proteome</keyword>
<keyword id="KW-0732">Signal</keyword>
<keyword id="KW-0749">Sporulation</keyword>
<name>SLEB_BACCR</name>
<sequence length="259" mass="28257">MRQKAIFKIAVLLAFIGLSLMVSSIQLKNVEAFSNQVIQRGASGEDVIELQSRLKYNGFYTGKVDGVFGWGTYWALRNFQEKFGLPVDGLAGAKTKQMLVKATKYDKSTANKGTTTNKGNSGGTAQENKPPQNKGTNVPNGYSQNDIQLMANAVYGESRGEPYLGQVAVAAVILNRVTSASFPNTVSGVIFEPRAFTAVADGQIYLTPNETAKKAVLDAINGWDPTGNALYYFNPDTATSKWIWTRPQIKKIGKHIFCK</sequence>
<organism>
    <name type="scientific">Bacillus cereus (strain ATCC 14579 / DSM 31 / CCUG 7414 / JCM 2152 / NBRC 15305 / NCIMB 9373 / NCTC 2599 / NRRL B-3711)</name>
    <dbReference type="NCBI Taxonomy" id="226900"/>
    <lineage>
        <taxon>Bacteria</taxon>
        <taxon>Bacillati</taxon>
        <taxon>Bacillota</taxon>
        <taxon>Bacilli</taxon>
        <taxon>Bacillales</taxon>
        <taxon>Bacillaceae</taxon>
        <taxon>Bacillus</taxon>
        <taxon>Bacillus cereus group</taxon>
    </lineage>
</organism>
<feature type="signal peptide" evidence="1">
    <location>
        <begin position="1"/>
        <end position="32"/>
    </location>
</feature>
<feature type="chain" id="PRO_0000022356" description="Spore cortex-lytic enzyme">
    <location>
        <begin position="33"/>
        <end position="259"/>
    </location>
</feature>
<feature type="region of interest" description="Disordered" evidence="2">
    <location>
        <begin position="109"/>
        <end position="142"/>
    </location>
</feature>
<feature type="compositionally biased region" description="Low complexity" evidence="2">
    <location>
        <begin position="110"/>
        <end position="125"/>
    </location>
</feature>
<feature type="compositionally biased region" description="Polar residues" evidence="2">
    <location>
        <begin position="126"/>
        <end position="142"/>
    </location>
</feature>
<feature type="helix" evidence="5">
    <location>
        <begin position="45"/>
        <end position="56"/>
    </location>
</feature>
<feature type="helix" evidence="5">
    <location>
        <begin position="70"/>
        <end position="82"/>
    </location>
</feature>
<feature type="helix" evidence="5">
    <location>
        <begin position="93"/>
        <end position="102"/>
    </location>
</feature>
<feature type="helix" evidence="4">
    <location>
        <begin position="144"/>
        <end position="158"/>
    </location>
</feature>
<feature type="helix" evidence="4">
    <location>
        <begin position="163"/>
        <end position="178"/>
    </location>
</feature>
<feature type="helix" evidence="4">
    <location>
        <begin position="186"/>
        <end position="191"/>
    </location>
</feature>
<feature type="helix" evidence="4">
    <location>
        <begin position="197"/>
        <end position="201"/>
    </location>
</feature>
<feature type="strand" evidence="4">
    <location>
        <begin position="204"/>
        <end position="206"/>
    </location>
</feature>
<feature type="helix" evidence="4">
    <location>
        <begin position="210"/>
        <end position="220"/>
    </location>
</feature>
<feature type="strand" evidence="4">
    <location>
        <begin position="231"/>
        <end position="233"/>
    </location>
</feature>
<feature type="turn" evidence="4">
    <location>
        <begin position="235"/>
        <end position="237"/>
    </location>
</feature>
<feature type="helix" evidence="4">
    <location>
        <begin position="241"/>
        <end position="245"/>
    </location>
</feature>
<feature type="strand" evidence="4">
    <location>
        <begin position="248"/>
        <end position="252"/>
    </location>
</feature>
<feature type="strand" evidence="4">
    <location>
        <begin position="255"/>
        <end position="258"/>
    </location>
</feature>
<accession>P0A3V0</accession>
<accession>P70874</accession>